<gene>
    <name evidence="1" type="primary">folE2</name>
    <name type="ordered locus">RHOS4_04330</name>
    <name type="ORF">RSP_1852</name>
</gene>
<name>GCH4_CERS4</name>
<accession>Q3J5D3</accession>
<keyword id="KW-0378">Hydrolase</keyword>
<keyword id="KW-1185">Reference proteome</keyword>
<sequence>MNILTPVAERLPSREEAEEALAVLRRWATHTPASDVAALAPEAPALVYPDLSRAYPRTFTVDEAYKASLPDLQNGPASLIVGAKAVIQHVGISNFRLPIRYHTRDNGDLQLETSVTGTVSLEAEKKGINMSRIMRSFYAHAEQAFSFEVIERALEDYKRDLESFDARIQMRFSFPVKVPSLRSGLTGWQYYDIALELVDRGGVRKEIMHLDFVYSSTCPCSLELSEHARRERGQLATPHSQRSVARISVEVRQGKCLWFEDLLDLVRSAVPTETQVMVKREDEQAFAELNAANPIFVEDAARSFCQALQSDPRIGDFRVVASHQESLHSHDAVSVLTEGPTFAAESLDPRLFSSLYHVG</sequence>
<feature type="chain" id="PRO_0000289518" description="GTP cyclohydrolase FolE2">
    <location>
        <begin position="1"/>
        <end position="359"/>
    </location>
</feature>
<feature type="site" description="May be catalytically important" evidence="1">
    <location>
        <position position="218"/>
    </location>
</feature>
<evidence type="ECO:0000255" key="1">
    <source>
        <dbReference type="HAMAP-Rule" id="MF_01527"/>
    </source>
</evidence>
<reference key="1">
    <citation type="submission" date="2005-09" db="EMBL/GenBank/DDBJ databases">
        <title>Complete sequence of chromosome 1 of Rhodobacter sphaeroides 2.4.1.</title>
        <authorList>
            <person name="Copeland A."/>
            <person name="Lucas S."/>
            <person name="Lapidus A."/>
            <person name="Barry K."/>
            <person name="Detter J.C."/>
            <person name="Glavina T."/>
            <person name="Hammon N."/>
            <person name="Israni S."/>
            <person name="Pitluck S."/>
            <person name="Richardson P."/>
            <person name="Mackenzie C."/>
            <person name="Choudhary M."/>
            <person name="Larimer F."/>
            <person name="Hauser L.J."/>
            <person name="Land M."/>
            <person name="Donohue T.J."/>
            <person name="Kaplan S."/>
        </authorList>
    </citation>
    <scope>NUCLEOTIDE SEQUENCE [LARGE SCALE GENOMIC DNA]</scope>
    <source>
        <strain>ATCC 17023 / DSM 158 / JCM 6121 / CCUG 31486 / LMG 2827 / NBRC 12203 / NCIMB 8253 / ATH 2.4.1.</strain>
    </source>
</reference>
<proteinExistence type="inferred from homology"/>
<dbReference type="EC" id="3.5.4.16" evidence="1"/>
<dbReference type="EMBL" id="CP000143">
    <property type="protein sequence ID" value="ABA78001.1"/>
    <property type="molecule type" value="Genomic_DNA"/>
</dbReference>
<dbReference type="RefSeq" id="WP_002722743.1">
    <property type="nucleotide sequence ID" value="NZ_CP030271.1"/>
</dbReference>
<dbReference type="RefSeq" id="YP_351902.1">
    <property type="nucleotide sequence ID" value="NC_007493.2"/>
</dbReference>
<dbReference type="SMR" id="Q3J5D3"/>
<dbReference type="STRING" id="272943.RSP_1852"/>
<dbReference type="EnsemblBacteria" id="ABA78001">
    <property type="protein sequence ID" value="ABA78001"/>
    <property type="gene ID" value="RSP_1852"/>
</dbReference>
<dbReference type="GeneID" id="3719119"/>
<dbReference type="KEGG" id="rsp:RSP_1852"/>
<dbReference type="PATRIC" id="fig|272943.9.peg.740"/>
<dbReference type="eggNOG" id="COG1469">
    <property type="taxonomic scope" value="Bacteria"/>
</dbReference>
<dbReference type="OrthoDB" id="239637at2"/>
<dbReference type="PhylomeDB" id="Q3J5D3"/>
<dbReference type="UniPathway" id="UPA00848">
    <property type="reaction ID" value="UER00151"/>
</dbReference>
<dbReference type="Proteomes" id="UP000002703">
    <property type="component" value="Chromosome 1"/>
</dbReference>
<dbReference type="GO" id="GO:0003934">
    <property type="term" value="F:GTP cyclohydrolase I activity"/>
    <property type="evidence" value="ECO:0007669"/>
    <property type="project" value="UniProtKB-UniRule"/>
</dbReference>
<dbReference type="GO" id="GO:0046654">
    <property type="term" value="P:tetrahydrofolate biosynthetic process"/>
    <property type="evidence" value="ECO:0007669"/>
    <property type="project" value="UniProtKB-UniRule"/>
</dbReference>
<dbReference type="Gene3D" id="3.10.270.10">
    <property type="entry name" value="Urate Oxidase"/>
    <property type="match status" value="1"/>
</dbReference>
<dbReference type="HAMAP" id="MF_01527_B">
    <property type="entry name" value="GTP_cyclohydrol_B"/>
    <property type="match status" value="1"/>
</dbReference>
<dbReference type="InterPro" id="IPR022838">
    <property type="entry name" value="GTP_cyclohydrolase_FolE2"/>
</dbReference>
<dbReference type="InterPro" id="IPR003801">
    <property type="entry name" value="GTP_cyclohydrolase_FolE2/MptA"/>
</dbReference>
<dbReference type="NCBIfam" id="NF010200">
    <property type="entry name" value="PRK13674.1-1"/>
    <property type="match status" value="1"/>
</dbReference>
<dbReference type="PANTHER" id="PTHR36445">
    <property type="entry name" value="GTP CYCLOHYDROLASE MPTA"/>
    <property type="match status" value="1"/>
</dbReference>
<dbReference type="PANTHER" id="PTHR36445:SF1">
    <property type="entry name" value="GTP CYCLOHYDROLASE MPTA"/>
    <property type="match status" value="1"/>
</dbReference>
<dbReference type="Pfam" id="PF02649">
    <property type="entry name" value="GCHY-1"/>
    <property type="match status" value="1"/>
</dbReference>
<comment type="function">
    <text evidence="1">Converts GTP to 7,8-dihydroneopterin triphosphate.</text>
</comment>
<comment type="catalytic activity">
    <reaction evidence="1">
        <text>GTP + H2O = 7,8-dihydroneopterin 3'-triphosphate + formate + H(+)</text>
        <dbReference type="Rhea" id="RHEA:17473"/>
        <dbReference type="ChEBI" id="CHEBI:15377"/>
        <dbReference type="ChEBI" id="CHEBI:15378"/>
        <dbReference type="ChEBI" id="CHEBI:15740"/>
        <dbReference type="ChEBI" id="CHEBI:37565"/>
        <dbReference type="ChEBI" id="CHEBI:58462"/>
        <dbReference type="EC" id="3.5.4.16"/>
    </reaction>
</comment>
<comment type="pathway">
    <text evidence="1">Cofactor biosynthesis; 7,8-dihydroneopterin triphosphate biosynthesis; 7,8-dihydroneopterin triphosphate from GTP: step 1/1.</text>
</comment>
<comment type="similarity">
    <text evidence="1">Belongs to the GTP cyclohydrolase IV family.</text>
</comment>
<organism>
    <name type="scientific">Cereibacter sphaeroides (strain ATCC 17023 / DSM 158 / JCM 6121 / CCUG 31486 / LMG 2827 / NBRC 12203 / NCIMB 8253 / ATH 2.4.1.)</name>
    <name type="common">Rhodobacter sphaeroides</name>
    <dbReference type="NCBI Taxonomy" id="272943"/>
    <lineage>
        <taxon>Bacteria</taxon>
        <taxon>Pseudomonadati</taxon>
        <taxon>Pseudomonadota</taxon>
        <taxon>Alphaproteobacteria</taxon>
        <taxon>Rhodobacterales</taxon>
        <taxon>Paracoccaceae</taxon>
        <taxon>Cereibacter</taxon>
    </lineage>
</organism>
<protein>
    <recommendedName>
        <fullName evidence="1">GTP cyclohydrolase FolE2</fullName>
        <ecNumber evidence="1">3.5.4.16</ecNumber>
    </recommendedName>
</protein>